<proteinExistence type="evidence at protein level"/>
<keyword id="KW-0472">Membrane</keyword>
<keyword id="KW-0597">Phosphoprotein</keyword>
<keyword id="KW-1185">Reference proteome</keyword>
<keyword id="KW-0762">Sugar transport</keyword>
<keyword id="KW-0812">Transmembrane</keyword>
<keyword id="KW-1133">Transmembrane helix</keyword>
<keyword id="KW-0813">Transport</keyword>
<feature type="chain" id="PRO_0000050416" description="Galactose transporter">
    <location>
        <begin position="1"/>
        <end position="574"/>
    </location>
</feature>
<feature type="topological domain" description="Cytoplasmic" evidence="1">
    <location>
        <begin position="1"/>
        <end position="70"/>
    </location>
</feature>
<feature type="transmembrane region" description="Helical; Name=1" evidence="1">
    <location>
        <begin position="71"/>
        <end position="91"/>
    </location>
</feature>
<feature type="topological domain" description="Extracellular" evidence="1">
    <location>
        <begin position="92"/>
        <end position="121"/>
    </location>
</feature>
<feature type="transmembrane region" description="Helical; Name=2" evidence="1">
    <location>
        <begin position="122"/>
        <end position="142"/>
    </location>
</feature>
<feature type="topological domain" description="Cytoplasmic" evidence="1">
    <location>
        <begin position="143"/>
        <end position="149"/>
    </location>
</feature>
<feature type="transmembrane region" description="Helical; Name=3" evidence="1">
    <location>
        <begin position="150"/>
        <end position="170"/>
    </location>
</feature>
<feature type="topological domain" description="Extracellular" evidence="1">
    <location>
        <begin position="171"/>
        <end position="175"/>
    </location>
</feature>
<feature type="transmembrane region" description="Helical; Name=4" evidence="1">
    <location>
        <begin position="176"/>
        <end position="196"/>
    </location>
</feature>
<feature type="topological domain" description="Cytoplasmic" evidence="1">
    <location>
        <begin position="197"/>
        <end position="207"/>
    </location>
</feature>
<feature type="transmembrane region" description="Helical; Name=5" evidence="1">
    <location>
        <begin position="208"/>
        <end position="228"/>
    </location>
</feature>
<feature type="topological domain" description="Extracellular" evidence="1">
    <location>
        <begin position="229"/>
        <end position="242"/>
    </location>
</feature>
<feature type="transmembrane region" description="Helical; Name=6" evidence="1">
    <location>
        <begin position="243"/>
        <end position="263"/>
    </location>
</feature>
<feature type="topological domain" description="Cytoplasmic" evidence="1">
    <location>
        <begin position="264"/>
        <end position="342"/>
    </location>
</feature>
<feature type="transmembrane region" description="Helical; Name=7" evidence="1">
    <location>
        <begin position="343"/>
        <end position="362"/>
    </location>
</feature>
<feature type="topological domain" description="Extracellular" evidence="1">
    <location>
        <begin position="363"/>
        <end position="366"/>
    </location>
</feature>
<feature type="transmembrane region" description="Helical; Name=8" evidence="1">
    <location>
        <begin position="367"/>
        <end position="387"/>
    </location>
</feature>
<feature type="topological domain" description="Cytoplasmic" evidence="1">
    <location>
        <begin position="388"/>
        <end position="394"/>
    </location>
</feature>
<feature type="transmembrane region" description="Helical; Name=9" evidence="1">
    <location>
        <begin position="395"/>
        <end position="415"/>
    </location>
</feature>
<feature type="topological domain" description="Extracellular" evidence="1">
    <location>
        <begin position="416"/>
        <end position="435"/>
    </location>
</feature>
<feature type="transmembrane region" description="Helical; Name=10" evidence="1">
    <location>
        <begin position="436"/>
        <end position="456"/>
    </location>
</feature>
<feature type="topological domain" description="Cytoplasmic" evidence="1">
    <location>
        <begin position="457"/>
        <end position="472"/>
    </location>
</feature>
<feature type="transmembrane region" description="Helical; Name=11" evidence="1">
    <location>
        <begin position="473"/>
        <end position="493"/>
    </location>
</feature>
<feature type="topological domain" description="Extracellular" evidence="1">
    <location>
        <begin position="494"/>
        <end position="499"/>
    </location>
</feature>
<feature type="transmembrane region" description="Helical; Name=12" evidence="1">
    <location>
        <begin position="500"/>
        <end position="520"/>
    </location>
</feature>
<feature type="topological domain" description="Cytoplasmic" evidence="1">
    <location>
        <begin position="521"/>
        <end position="574"/>
    </location>
</feature>
<feature type="region of interest" description="Disordered" evidence="2">
    <location>
        <begin position="1"/>
        <end position="57"/>
    </location>
</feature>
<feature type="compositionally biased region" description="Polar residues" evidence="2">
    <location>
        <begin position="23"/>
        <end position="38"/>
    </location>
</feature>
<feature type="modified residue" description="Phosphoserine" evidence="4">
    <location>
        <position position="32"/>
    </location>
</feature>
<feature type="modified residue" description="Phosphoserine" evidence="4">
    <location>
        <position position="35"/>
    </location>
</feature>
<feature type="modified residue" description="Phosphoserine" evidence="4">
    <location>
        <position position="39"/>
    </location>
</feature>
<feature type="modified residue" description="Phosphoserine" evidence="4">
    <location>
        <position position="48"/>
    </location>
</feature>
<feature type="modified residue" description="Phosphoserine" evidence="4">
    <location>
        <position position="50"/>
    </location>
</feature>
<feature type="modified residue" description="Phosphoserine" evidence="4">
    <location>
        <position position="53"/>
    </location>
</feature>
<feature type="modified residue" description="Phosphoserine" evidence="4">
    <location>
        <position position="55"/>
    </location>
</feature>
<feature type="sequence conflict" description="In Ref. 1 and 2." evidence="3" ref="1 2">
    <original>S</original>
    <variation>P</variation>
    <location>
        <position position="50"/>
    </location>
</feature>
<feature type="sequence conflict" description="In Ref. 1; AAA34623." evidence="3" ref="1">
    <original>A</original>
    <variation>R</variation>
    <location>
        <position position="79"/>
    </location>
</feature>
<feature type="sequence conflict" description="In Ref. 1 and 2." evidence="3" ref="1 2">
    <original>G</original>
    <variation>S</variation>
    <location>
        <position position="90"/>
    </location>
</feature>
<feature type="sequence conflict" description="In Ref. 1 and 2." evidence="3" ref="1 2">
    <original>H</original>
    <variation>R</variation>
    <location>
        <position position="392"/>
    </location>
</feature>
<dbReference type="EMBL" id="M68547">
    <property type="protein sequence ID" value="AAA34623.1"/>
    <property type="molecule type" value="Genomic_DNA"/>
</dbReference>
<dbReference type="EMBL" id="M81879">
    <property type="protein sequence ID" value="AAA34624.1"/>
    <property type="molecule type" value="Genomic_DNA"/>
</dbReference>
<dbReference type="EMBL" id="Z73253">
    <property type="protein sequence ID" value="CAA97640.1"/>
    <property type="molecule type" value="Genomic_DNA"/>
</dbReference>
<dbReference type="EMBL" id="Z73254">
    <property type="protein sequence ID" value="CAA97642.1"/>
    <property type="molecule type" value="Genomic_DNA"/>
</dbReference>
<dbReference type="EMBL" id="U53880">
    <property type="protein sequence ID" value="AAB67585.1"/>
    <property type="molecule type" value="Genomic_DNA"/>
</dbReference>
<dbReference type="EMBL" id="BK006945">
    <property type="protein sequence ID" value="DAA09397.1"/>
    <property type="molecule type" value="Genomic_DNA"/>
</dbReference>
<dbReference type="PIR" id="S64913">
    <property type="entry name" value="S64913"/>
</dbReference>
<dbReference type="RefSeq" id="NP_013182.1">
    <property type="nucleotide sequence ID" value="NM_001181968.1"/>
</dbReference>
<dbReference type="SMR" id="P13181"/>
<dbReference type="BioGRID" id="31354">
    <property type="interactions" value="76"/>
</dbReference>
<dbReference type="DIP" id="DIP-4773N"/>
<dbReference type="FunCoup" id="P13181">
    <property type="interactions" value="1494"/>
</dbReference>
<dbReference type="IntAct" id="P13181">
    <property type="interactions" value="3"/>
</dbReference>
<dbReference type="MINT" id="P13181"/>
<dbReference type="STRING" id="4932.YLR081W"/>
<dbReference type="TCDB" id="2.A.1.1.6">
    <property type="family name" value="the major facilitator superfamily (mfs)"/>
</dbReference>
<dbReference type="iPTMnet" id="P13181"/>
<dbReference type="PaxDb" id="4932-YLR081W"/>
<dbReference type="PeptideAtlas" id="P13181"/>
<dbReference type="EnsemblFungi" id="YLR081W_mRNA">
    <property type="protein sequence ID" value="YLR081W"/>
    <property type="gene ID" value="YLR081W"/>
</dbReference>
<dbReference type="GeneID" id="850770"/>
<dbReference type="KEGG" id="sce:YLR081W"/>
<dbReference type="AGR" id="SGD:S000004071"/>
<dbReference type="SGD" id="S000004071">
    <property type="gene designation" value="GAL2"/>
</dbReference>
<dbReference type="VEuPathDB" id="FungiDB:YLR081W"/>
<dbReference type="eggNOG" id="KOG0254">
    <property type="taxonomic scope" value="Eukaryota"/>
</dbReference>
<dbReference type="GeneTree" id="ENSGT00940000176280"/>
<dbReference type="HOGENOM" id="CLU_001265_30_1_1"/>
<dbReference type="InParanoid" id="P13181"/>
<dbReference type="OMA" id="YCISIGA"/>
<dbReference type="OrthoDB" id="5141738at2759"/>
<dbReference type="BioCyc" id="YEAST:G3O-32232-MONOMER"/>
<dbReference type="BioGRID-ORCS" id="850770">
    <property type="hits" value="3 hits in 10 CRISPR screens"/>
</dbReference>
<dbReference type="PRO" id="PR:P13181"/>
<dbReference type="Proteomes" id="UP000002311">
    <property type="component" value="Chromosome XII"/>
</dbReference>
<dbReference type="RNAct" id="P13181">
    <property type="molecule type" value="protein"/>
</dbReference>
<dbReference type="GO" id="GO:0071944">
    <property type="term" value="C:cell periphery"/>
    <property type="evidence" value="ECO:0007005"/>
    <property type="project" value="SGD"/>
</dbReference>
<dbReference type="GO" id="GO:0005886">
    <property type="term" value="C:plasma membrane"/>
    <property type="evidence" value="ECO:0000314"/>
    <property type="project" value="SGD"/>
</dbReference>
<dbReference type="GO" id="GO:0005351">
    <property type="term" value="F:carbohydrate:proton symporter activity"/>
    <property type="evidence" value="ECO:0000318"/>
    <property type="project" value="GO_Central"/>
</dbReference>
<dbReference type="GO" id="GO:0055056">
    <property type="term" value="F:D-glucose transmembrane transporter activity"/>
    <property type="evidence" value="ECO:0000314"/>
    <property type="project" value="SGD"/>
</dbReference>
<dbReference type="GO" id="GO:0005354">
    <property type="term" value="F:galactose transmembrane transporter activity"/>
    <property type="evidence" value="ECO:0000315"/>
    <property type="project" value="SGD"/>
</dbReference>
<dbReference type="GO" id="GO:0008643">
    <property type="term" value="P:carbohydrate transport"/>
    <property type="evidence" value="ECO:0000318"/>
    <property type="project" value="GO_Central"/>
</dbReference>
<dbReference type="GO" id="GO:0006012">
    <property type="term" value="P:galactose metabolic process"/>
    <property type="evidence" value="ECO:0000315"/>
    <property type="project" value="SGD"/>
</dbReference>
<dbReference type="GO" id="GO:0015757">
    <property type="term" value="P:galactose transmembrane transport"/>
    <property type="evidence" value="ECO:0000315"/>
    <property type="project" value="SGD"/>
</dbReference>
<dbReference type="CDD" id="cd17356">
    <property type="entry name" value="MFS_HXT"/>
    <property type="match status" value="1"/>
</dbReference>
<dbReference type="FunFam" id="1.20.1250.20:FF:000044">
    <property type="entry name" value="Hexose transporter Hxt3p"/>
    <property type="match status" value="1"/>
</dbReference>
<dbReference type="Gene3D" id="1.20.1250.20">
    <property type="entry name" value="MFS general substrate transporter like domains"/>
    <property type="match status" value="1"/>
</dbReference>
<dbReference type="InterPro" id="IPR020846">
    <property type="entry name" value="MFS_dom"/>
</dbReference>
<dbReference type="InterPro" id="IPR005828">
    <property type="entry name" value="MFS_sugar_transport-like"/>
</dbReference>
<dbReference type="InterPro" id="IPR050360">
    <property type="entry name" value="MFS_Sugar_Transporters"/>
</dbReference>
<dbReference type="InterPro" id="IPR036259">
    <property type="entry name" value="MFS_trans_sf"/>
</dbReference>
<dbReference type="InterPro" id="IPR003663">
    <property type="entry name" value="Sugar/inositol_transpt"/>
</dbReference>
<dbReference type="InterPro" id="IPR005829">
    <property type="entry name" value="Sugar_transporter_CS"/>
</dbReference>
<dbReference type="NCBIfam" id="TIGR00879">
    <property type="entry name" value="SP"/>
    <property type="match status" value="1"/>
</dbReference>
<dbReference type="PANTHER" id="PTHR48022:SF75">
    <property type="entry name" value="GALACTOSE TRANSPORTER-RELATED"/>
    <property type="match status" value="1"/>
</dbReference>
<dbReference type="PANTHER" id="PTHR48022">
    <property type="entry name" value="PLASTIDIC GLUCOSE TRANSPORTER 4"/>
    <property type="match status" value="1"/>
</dbReference>
<dbReference type="Pfam" id="PF00083">
    <property type="entry name" value="Sugar_tr"/>
    <property type="match status" value="1"/>
</dbReference>
<dbReference type="PRINTS" id="PR00171">
    <property type="entry name" value="SUGRTRNSPORT"/>
</dbReference>
<dbReference type="SUPFAM" id="SSF103473">
    <property type="entry name" value="MFS general substrate transporter"/>
    <property type="match status" value="1"/>
</dbReference>
<dbReference type="PROSITE" id="PS50850">
    <property type="entry name" value="MFS"/>
    <property type="match status" value="1"/>
</dbReference>
<dbReference type="PROSITE" id="PS00217">
    <property type="entry name" value="SUGAR_TRANSPORT_2"/>
    <property type="match status" value="1"/>
</dbReference>
<comment type="function">
    <text>GAL2 is a facilitated diffusion transporter required for both the high-affinity galactokinase-dependent and low-affinity galactokinase-independent galactose transport processes.</text>
</comment>
<comment type="subcellular location">
    <subcellularLocation>
        <location>Membrane</location>
        <topology>Multi-pass membrane protein</topology>
    </subcellularLocation>
</comment>
<comment type="similarity">
    <text evidence="3">Belongs to the major facilitator superfamily. Sugar transporter (TC 2.A.1.1) family.</text>
</comment>
<gene>
    <name type="primary">GAL2</name>
    <name type="synonym">IMP1</name>
    <name type="ordered locus">YLR081W</name>
    <name type="ORF">L9449.6</name>
</gene>
<evidence type="ECO:0000255" key="1"/>
<evidence type="ECO:0000256" key="2">
    <source>
        <dbReference type="SAM" id="MobiDB-lite"/>
    </source>
</evidence>
<evidence type="ECO:0000305" key="3"/>
<evidence type="ECO:0007744" key="4">
    <source>
    </source>
</evidence>
<sequence length="574" mass="63626">MAVEENNMPVVSQQPQAGEDVISSLSKDSHLSAQSQKYSNDELKAGESGSEGSQSVPIEIPKKPMSEYVTVSLLCLCVAFGGFMFGWDTGTISGFVVQTDFLRRFGMKHKDGTHYLSNVRTGLIVAIFNIGCAFGGIILSKGGDMYGRKKGLSIVVSVYIVGIIIQIASINKWYQYFIGRIISGLGVGGIAVLCPMLISEIAPKHLRGTLVSCYQLMITAGIFLGYCTNYGTKSYSNSVQWRVPLGLCFAWSLFMIGALTLVPESPRYLCEVNKVEDAKRSIAKSNKVSPEDPAVQAELDLIMAGIEAEKLAGNASWGELFSTKTKVFQRLLMGVFVQMFQQLTGNNYFFYYGTVIFKSVGLDDSFETSIVIGVVNFASTFFSLWTVENLGHRKCLLLGAATMMACMVIYASVGVTRLYPHGKSQPSSKGAGNCMIVFTCFYIFCYATTWAPVAWVITAESFPLRVKSKCMALASASNWVWGFLIAFFTPFITSAINFYYGYVFMGCLVAMFFYVFFFVPETKGLSLEEIQELWEEGVLPWKSEGWIPSSRRGNNYDLEDLQHDDKPWYKAMLE</sequence>
<protein>
    <recommendedName>
        <fullName>Galactose transporter</fullName>
    </recommendedName>
    <alternativeName>
        <fullName>Galactose permease</fullName>
    </alternativeName>
</protein>
<accession>P13181</accession>
<accession>D6VY81</accession>
<accession>Q12521</accession>
<reference key="1">
    <citation type="journal article" date="1989" name="J. Bacteriol.">
        <title>Sequence and structure of the yeast galactose transporter.</title>
        <authorList>
            <person name="Szkutnicka K."/>
            <person name="Tschopp J.F."/>
            <person name="Andrews L."/>
            <person name="Cirillo V.P."/>
        </authorList>
    </citation>
    <scope>NUCLEOTIDE SEQUENCE [GENOMIC DNA]</scope>
</reference>
<reference key="2">
    <citation type="journal article" date="1989" name="Gene">
        <title>Yeast galactose permease is related to yeast and mammalian glucose transporters.</title>
        <authorList>
            <person name="Nehlin J.O."/>
            <person name="Carlberg M."/>
            <person name="Ronne H."/>
        </authorList>
    </citation>
    <scope>NUCLEOTIDE SEQUENCE [GENOMIC DNA]</scope>
</reference>
<reference key="3">
    <citation type="journal article" date="1997" name="Nature">
        <title>The nucleotide sequence of Saccharomyces cerevisiae chromosome XII.</title>
        <authorList>
            <person name="Johnston M."/>
            <person name="Hillier L.W."/>
            <person name="Riles L."/>
            <person name="Albermann K."/>
            <person name="Andre B."/>
            <person name="Ansorge W."/>
            <person name="Benes V."/>
            <person name="Brueckner M."/>
            <person name="Delius H."/>
            <person name="Dubois E."/>
            <person name="Duesterhoeft A."/>
            <person name="Entian K.-D."/>
            <person name="Floeth M."/>
            <person name="Goffeau A."/>
            <person name="Hebling U."/>
            <person name="Heumann K."/>
            <person name="Heuss-Neitzel D."/>
            <person name="Hilbert H."/>
            <person name="Hilger F."/>
            <person name="Kleine K."/>
            <person name="Koetter P."/>
            <person name="Louis E.J."/>
            <person name="Messenguy F."/>
            <person name="Mewes H.-W."/>
            <person name="Miosga T."/>
            <person name="Moestl D."/>
            <person name="Mueller-Auer S."/>
            <person name="Nentwich U."/>
            <person name="Obermaier B."/>
            <person name="Piravandi E."/>
            <person name="Pohl T.M."/>
            <person name="Portetelle D."/>
            <person name="Purnelle B."/>
            <person name="Rechmann S."/>
            <person name="Rieger M."/>
            <person name="Rinke M."/>
            <person name="Rose M."/>
            <person name="Scharfe M."/>
            <person name="Scherens B."/>
            <person name="Scholler P."/>
            <person name="Schwager C."/>
            <person name="Schwarz S."/>
            <person name="Underwood A.P."/>
            <person name="Urrestarazu L.A."/>
            <person name="Vandenbol M."/>
            <person name="Verhasselt P."/>
            <person name="Vierendeels F."/>
            <person name="Voet M."/>
            <person name="Volckaert G."/>
            <person name="Voss H."/>
            <person name="Wambutt R."/>
            <person name="Wedler E."/>
            <person name="Wedler H."/>
            <person name="Zimmermann F.K."/>
            <person name="Zollner A."/>
            <person name="Hani J."/>
            <person name="Hoheisel J.D."/>
        </authorList>
    </citation>
    <scope>NUCLEOTIDE SEQUENCE [LARGE SCALE GENOMIC DNA]</scope>
    <source>
        <strain>ATCC 204508 / S288c</strain>
    </source>
</reference>
<reference key="4">
    <citation type="journal article" date="2014" name="G3 (Bethesda)">
        <title>The reference genome sequence of Saccharomyces cerevisiae: Then and now.</title>
        <authorList>
            <person name="Engel S.R."/>
            <person name="Dietrich F.S."/>
            <person name="Fisk D.G."/>
            <person name="Binkley G."/>
            <person name="Balakrishnan R."/>
            <person name="Costanzo M.C."/>
            <person name="Dwight S.S."/>
            <person name="Hitz B.C."/>
            <person name="Karra K."/>
            <person name="Nash R.S."/>
            <person name="Weng S."/>
            <person name="Wong E.D."/>
            <person name="Lloyd P."/>
            <person name="Skrzypek M.S."/>
            <person name="Miyasato S.R."/>
            <person name="Simison M."/>
            <person name="Cherry J.M."/>
        </authorList>
    </citation>
    <scope>GENOME REANNOTATION</scope>
    <source>
        <strain>ATCC 204508 / S288c</strain>
    </source>
</reference>
<reference key="5">
    <citation type="journal article" date="2006" name="Proc. Natl. Acad. Sci. U.S.A.">
        <title>A global topology map of the Saccharomyces cerevisiae membrane proteome.</title>
        <authorList>
            <person name="Kim H."/>
            <person name="Melen K."/>
            <person name="Oesterberg M."/>
            <person name="von Heijne G."/>
        </authorList>
    </citation>
    <scope>TOPOLOGY [LARGE SCALE ANALYSIS]</scope>
    <source>
        <strain>ATCC 208353 / W303-1A</strain>
    </source>
</reference>
<reference key="6">
    <citation type="journal article" date="2009" name="Science">
        <title>Global analysis of Cdk1 substrate phosphorylation sites provides insights into evolution.</title>
        <authorList>
            <person name="Holt L.J."/>
            <person name="Tuch B.B."/>
            <person name="Villen J."/>
            <person name="Johnson A.D."/>
            <person name="Gygi S.P."/>
            <person name="Morgan D.O."/>
        </authorList>
    </citation>
    <scope>PHOSPHORYLATION [LARGE SCALE ANALYSIS] AT SER-32; SER-35; SER-39; SER-48; SER-50; SER-53 AND SER-55</scope>
    <scope>IDENTIFICATION BY MASS SPECTROMETRY [LARGE SCALE ANALYSIS]</scope>
</reference>
<organism>
    <name type="scientific">Saccharomyces cerevisiae (strain ATCC 204508 / S288c)</name>
    <name type="common">Baker's yeast</name>
    <dbReference type="NCBI Taxonomy" id="559292"/>
    <lineage>
        <taxon>Eukaryota</taxon>
        <taxon>Fungi</taxon>
        <taxon>Dikarya</taxon>
        <taxon>Ascomycota</taxon>
        <taxon>Saccharomycotina</taxon>
        <taxon>Saccharomycetes</taxon>
        <taxon>Saccharomycetales</taxon>
        <taxon>Saccharomycetaceae</taxon>
        <taxon>Saccharomyces</taxon>
    </lineage>
</organism>
<name>GAL2_YEAST</name>